<name>DSBD_PSEF5</name>
<protein>
    <recommendedName>
        <fullName evidence="1">Thiol:disulfide interchange protein DsbD</fullName>
        <ecNumber evidence="1">1.8.1.8</ecNumber>
    </recommendedName>
    <alternativeName>
        <fullName evidence="1">Protein-disulfide reductase</fullName>
        <shortName evidence="1">Disulfide reductase</shortName>
    </alternativeName>
</protein>
<dbReference type="EC" id="1.8.1.8" evidence="1"/>
<dbReference type="EMBL" id="CP000076">
    <property type="protein sequence ID" value="AAY93438.1"/>
    <property type="molecule type" value="Genomic_DNA"/>
</dbReference>
<dbReference type="RefSeq" id="WP_011062457.1">
    <property type="nucleotide sequence ID" value="NC_004129.6"/>
</dbReference>
<dbReference type="SMR" id="Q4K909"/>
<dbReference type="STRING" id="220664.PFL_4182"/>
<dbReference type="KEGG" id="pfl:PFL_4182"/>
<dbReference type="PATRIC" id="fig|220664.5.peg.4279"/>
<dbReference type="eggNOG" id="COG4232">
    <property type="taxonomic scope" value="Bacteria"/>
</dbReference>
<dbReference type="HOGENOM" id="CLU_014657_3_0_6"/>
<dbReference type="Proteomes" id="UP000008540">
    <property type="component" value="Chromosome"/>
</dbReference>
<dbReference type="GO" id="GO:0005886">
    <property type="term" value="C:plasma membrane"/>
    <property type="evidence" value="ECO:0007669"/>
    <property type="project" value="UniProtKB-SubCell"/>
</dbReference>
<dbReference type="GO" id="GO:0009055">
    <property type="term" value="F:electron transfer activity"/>
    <property type="evidence" value="ECO:0007669"/>
    <property type="project" value="UniProtKB-UniRule"/>
</dbReference>
<dbReference type="GO" id="GO:0047134">
    <property type="term" value="F:protein-disulfide reductase [NAD(P)H] activity"/>
    <property type="evidence" value="ECO:0007669"/>
    <property type="project" value="UniProtKB-UniRule"/>
</dbReference>
<dbReference type="GO" id="GO:0045454">
    <property type="term" value="P:cell redox homeostasis"/>
    <property type="evidence" value="ECO:0007669"/>
    <property type="project" value="TreeGrafter"/>
</dbReference>
<dbReference type="GO" id="GO:0017004">
    <property type="term" value="P:cytochrome complex assembly"/>
    <property type="evidence" value="ECO:0007669"/>
    <property type="project" value="UniProtKB-UniRule"/>
</dbReference>
<dbReference type="CDD" id="cd02953">
    <property type="entry name" value="DsbDgamma"/>
    <property type="match status" value="1"/>
</dbReference>
<dbReference type="Gene3D" id="3.40.30.10">
    <property type="entry name" value="Glutaredoxin"/>
    <property type="match status" value="1"/>
</dbReference>
<dbReference type="Gene3D" id="2.60.40.1250">
    <property type="entry name" value="Thiol:disulfide interchange protein DsbD, N-terminal domain"/>
    <property type="match status" value="1"/>
</dbReference>
<dbReference type="HAMAP" id="MF_00399">
    <property type="entry name" value="DbsD"/>
    <property type="match status" value="1"/>
</dbReference>
<dbReference type="InterPro" id="IPR003834">
    <property type="entry name" value="Cyt_c_assmbl_TM_dom"/>
</dbReference>
<dbReference type="InterPro" id="IPR035671">
    <property type="entry name" value="DsbD_gamma"/>
</dbReference>
<dbReference type="InterPro" id="IPR028250">
    <property type="entry name" value="DsbDN"/>
</dbReference>
<dbReference type="InterPro" id="IPR036929">
    <property type="entry name" value="DsbDN_sf"/>
</dbReference>
<dbReference type="InterPro" id="IPR022910">
    <property type="entry name" value="Thiol_diS_interchange_DbsD"/>
</dbReference>
<dbReference type="InterPro" id="IPR036249">
    <property type="entry name" value="Thioredoxin-like_sf"/>
</dbReference>
<dbReference type="InterPro" id="IPR017937">
    <property type="entry name" value="Thioredoxin_CS"/>
</dbReference>
<dbReference type="InterPro" id="IPR013766">
    <property type="entry name" value="Thioredoxin_domain"/>
</dbReference>
<dbReference type="NCBIfam" id="NF001419">
    <property type="entry name" value="PRK00293.1"/>
    <property type="match status" value="1"/>
</dbReference>
<dbReference type="PANTHER" id="PTHR32234">
    <property type="entry name" value="THIOL:DISULFIDE INTERCHANGE PROTEIN DSBD"/>
    <property type="match status" value="1"/>
</dbReference>
<dbReference type="PANTHER" id="PTHR32234:SF0">
    <property type="entry name" value="THIOL:DISULFIDE INTERCHANGE PROTEIN DSBD"/>
    <property type="match status" value="1"/>
</dbReference>
<dbReference type="Pfam" id="PF11412">
    <property type="entry name" value="DsbD_N"/>
    <property type="match status" value="1"/>
</dbReference>
<dbReference type="Pfam" id="PF02683">
    <property type="entry name" value="DsbD_TM"/>
    <property type="match status" value="1"/>
</dbReference>
<dbReference type="Pfam" id="PF13899">
    <property type="entry name" value="Thioredoxin_7"/>
    <property type="match status" value="1"/>
</dbReference>
<dbReference type="SUPFAM" id="SSF74863">
    <property type="entry name" value="Thiol:disulfide interchange protein DsbD, N-terminal domain (DsbD-alpha)"/>
    <property type="match status" value="1"/>
</dbReference>
<dbReference type="SUPFAM" id="SSF52833">
    <property type="entry name" value="Thioredoxin-like"/>
    <property type="match status" value="1"/>
</dbReference>
<dbReference type="PROSITE" id="PS00194">
    <property type="entry name" value="THIOREDOXIN_1"/>
    <property type="match status" value="1"/>
</dbReference>
<dbReference type="PROSITE" id="PS51352">
    <property type="entry name" value="THIOREDOXIN_2"/>
    <property type="match status" value="1"/>
</dbReference>
<organism>
    <name type="scientific">Pseudomonas fluorescens (strain ATCC BAA-477 / NRRL B-23932 / Pf-5)</name>
    <dbReference type="NCBI Taxonomy" id="220664"/>
    <lineage>
        <taxon>Bacteria</taxon>
        <taxon>Pseudomonadati</taxon>
        <taxon>Pseudomonadota</taxon>
        <taxon>Gammaproteobacteria</taxon>
        <taxon>Pseudomonadales</taxon>
        <taxon>Pseudomonadaceae</taxon>
        <taxon>Pseudomonas</taxon>
    </lineage>
</organism>
<reference key="1">
    <citation type="journal article" date="2005" name="Nat. Biotechnol.">
        <title>Complete genome sequence of the plant commensal Pseudomonas fluorescens Pf-5.</title>
        <authorList>
            <person name="Paulsen I.T."/>
            <person name="Press C.M."/>
            <person name="Ravel J."/>
            <person name="Kobayashi D.Y."/>
            <person name="Myers G.S.A."/>
            <person name="Mavrodi D.V."/>
            <person name="DeBoy R.T."/>
            <person name="Seshadri R."/>
            <person name="Ren Q."/>
            <person name="Madupu R."/>
            <person name="Dodson R.J."/>
            <person name="Durkin A.S."/>
            <person name="Brinkac L.M."/>
            <person name="Daugherty S.C."/>
            <person name="Sullivan S.A."/>
            <person name="Rosovitz M.J."/>
            <person name="Gwinn M.L."/>
            <person name="Zhou L."/>
            <person name="Schneider D.J."/>
            <person name="Cartinhour S.W."/>
            <person name="Nelson W.C."/>
            <person name="Weidman J."/>
            <person name="Watkins K."/>
            <person name="Tran K."/>
            <person name="Khouri H."/>
            <person name="Pierson E.A."/>
            <person name="Pierson L.S. III"/>
            <person name="Thomashow L.S."/>
            <person name="Loper J.E."/>
        </authorList>
    </citation>
    <scope>NUCLEOTIDE SEQUENCE [LARGE SCALE GENOMIC DNA]</scope>
    <source>
        <strain>ATCC BAA-477 / NRRL B-23932 / Pf-5</strain>
    </source>
</reference>
<proteinExistence type="inferred from homology"/>
<gene>
    <name evidence="1" type="primary">dsbD</name>
    <name type="ordered locus">PFL_4182</name>
</gene>
<evidence type="ECO:0000255" key="1">
    <source>
        <dbReference type="HAMAP-Rule" id="MF_00399"/>
    </source>
</evidence>
<comment type="function">
    <text evidence="1">Required to facilitate the formation of correct disulfide bonds in some periplasmic proteins and for the assembly of the periplasmic c-type cytochromes. Acts by transferring electrons from cytoplasmic thioredoxin to the periplasm. This transfer involves a cascade of disulfide bond formation and reduction steps.</text>
</comment>
<comment type="catalytic activity">
    <reaction evidence="1">
        <text>[protein]-dithiol + NAD(+) = [protein]-disulfide + NADH + H(+)</text>
        <dbReference type="Rhea" id="RHEA:18749"/>
        <dbReference type="Rhea" id="RHEA-COMP:10593"/>
        <dbReference type="Rhea" id="RHEA-COMP:10594"/>
        <dbReference type="ChEBI" id="CHEBI:15378"/>
        <dbReference type="ChEBI" id="CHEBI:29950"/>
        <dbReference type="ChEBI" id="CHEBI:50058"/>
        <dbReference type="ChEBI" id="CHEBI:57540"/>
        <dbReference type="ChEBI" id="CHEBI:57945"/>
        <dbReference type="EC" id="1.8.1.8"/>
    </reaction>
</comment>
<comment type="catalytic activity">
    <reaction evidence="1">
        <text>[protein]-dithiol + NADP(+) = [protein]-disulfide + NADPH + H(+)</text>
        <dbReference type="Rhea" id="RHEA:18753"/>
        <dbReference type="Rhea" id="RHEA-COMP:10593"/>
        <dbReference type="Rhea" id="RHEA-COMP:10594"/>
        <dbReference type="ChEBI" id="CHEBI:15378"/>
        <dbReference type="ChEBI" id="CHEBI:29950"/>
        <dbReference type="ChEBI" id="CHEBI:50058"/>
        <dbReference type="ChEBI" id="CHEBI:57783"/>
        <dbReference type="ChEBI" id="CHEBI:58349"/>
        <dbReference type="EC" id="1.8.1.8"/>
    </reaction>
</comment>
<comment type="subcellular location">
    <subcellularLocation>
        <location evidence="1">Cell inner membrane</location>
        <topology evidence="1">Multi-pass membrane protein</topology>
    </subcellularLocation>
</comment>
<comment type="similarity">
    <text evidence="1">Belongs to the thioredoxin family. DsbD subfamily.</text>
</comment>
<keyword id="KW-0997">Cell inner membrane</keyword>
<keyword id="KW-1003">Cell membrane</keyword>
<keyword id="KW-0201">Cytochrome c-type biogenesis</keyword>
<keyword id="KW-1015">Disulfide bond</keyword>
<keyword id="KW-0249">Electron transport</keyword>
<keyword id="KW-0472">Membrane</keyword>
<keyword id="KW-0520">NAD</keyword>
<keyword id="KW-0560">Oxidoreductase</keyword>
<keyword id="KW-0676">Redox-active center</keyword>
<keyword id="KW-0732">Signal</keyword>
<keyword id="KW-0812">Transmembrane</keyword>
<keyword id="KW-1133">Transmembrane helix</keyword>
<keyword id="KW-0813">Transport</keyword>
<accession>Q4K909</accession>
<sequence length="583" mass="62515">MRRLFLLLFMLFTTLAHAGNNPFEVKPDFLPVGKAFVFTSERLPSGETQLFWQIADGYYLYQKRLKFDGVAPELQPTLPAGEDHSDEFFGQQTVYRQGLEVKLPAAASGKVKLGWQGCADAGLCYPPQTLEVDLGGAPAVAASNVATTSNGSAQDQLLANDLQHKSWGLGLLAFFGFGLLLAFAPCSLPMLPILAGMVVGSGASPRRGLALASSYVLCMALVYAGMGVIAALLGSNLQAWLQQPWVLGSFAALFVLLSLPMFGFFELQMPALLRDRLEGASRQRQGGSLIGCGILGALSALLVGPCMTAPLAGGLLYIAQTGNALFGGLALFALGLGIGLPLLLLVTLGNRFLPKPGPWMNLLKGVFGILFLGTAIYMLRPVLNPGLWMGLWGALALVVAYCAWQQRAIAGRLLHLFGAGALLFAAWGGMLLVGAAGGGDDLWRPLKVYRGGPVANSVTAHDAFTTVKSPAELQGALDSARAQGQWVLLDYYADWCVSCKIMEKTVFGQPQVLEALKDVRLLRLDVTLDNADGRELLSRYKVPGPPSMLWIGPDGSERRSQRITGEVDANAFLQRWTQTREAR</sequence>
<feature type="signal peptide" evidence="1">
    <location>
        <begin position="1"/>
        <end position="18"/>
    </location>
</feature>
<feature type="chain" id="PRO_0000304393" description="Thiol:disulfide interchange protein DsbD">
    <location>
        <begin position="19"/>
        <end position="583"/>
    </location>
</feature>
<feature type="transmembrane region" description="Helical" evidence="1">
    <location>
        <begin position="168"/>
        <end position="188"/>
    </location>
</feature>
<feature type="transmembrane region" description="Helical" evidence="1">
    <location>
        <begin position="214"/>
        <end position="234"/>
    </location>
</feature>
<feature type="transmembrane region" description="Helical" evidence="1">
    <location>
        <begin position="245"/>
        <end position="265"/>
    </location>
</feature>
<feature type="transmembrane region" description="Helical" evidence="1">
    <location>
        <begin position="289"/>
        <end position="309"/>
    </location>
</feature>
<feature type="transmembrane region" description="Helical" evidence="1">
    <location>
        <begin position="326"/>
        <end position="346"/>
    </location>
</feature>
<feature type="transmembrane region" description="Helical" evidence="1">
    <location>
        <begin position="359"/>
        <end position="379"/>
    </location>
</feature>
<feature type="transmembrane region" description="Helical" evidence="1">
    <location>
        <begin position="382"/>
        <end position="402"/>
    </location>
</feature>
<feature type="transmembrane region" description="Helical" evidence="1">
    <location>
        <begin position="413"/>
        <end position="433"/>
    </location>
</feature>
<feature type="domain" description="Thioredoxin" evidence="1">
    <location>
        <begin position="458"/>
        <end position="581"/>
    </location>
</feature>
<feature type="disulfide bond" description="Redox-active" evidence="1">
    <location>
        <begin position="118"/>
        <end position="124"/>
    </location>
</feature>
<feature type="disulfide bond" description="Redox-active" evidence="1">
    <location>
        <begin position="186"/>
        <end position="306"/>
    </location>
</feature>
<feature type="disulfide bond" description="Redox-active" evidence="1">
    <location>
        <begin position="496"/>
        <end position="499"/>
    </location>
</feature>